<dbReference type="EMBL" id="AAFI02000032">
    <property type="protein sequence ID" value="EAL67579.1"/>
    <property type="molecule type" value="Genomic_DNA"/>
</dbReference>
<dbReference type="RefSeq" id="XP_641552.1">
    <property type="nucleotide sequence ID" value="XM_636460.1"/>
</dbReference>
<dbReference type="SMR" id="Q54WK1"/>
<dbReference type="FunCoup" id="Q54WK1">
    <property type="interactions" value="1"/>
</dbReference>
<dbReference type="PaxDb" id="44689-DDB0231760"/>
<dbReference type="EnsemblProtists" id="EAL67579">
    <property type="protein sequence ID" value="EAL67579"/>
    <property type="gene ID" value="DDB_G0279609"/>
</dbReference>
<dbReference type="GeneID" id="8622126"/>
<dbReference type="KEGG" id="ddi:DDB_G0279609"/>
<dbReference type="dictyBase" id="DDB_G0279609"/>
<dbReference type="VEuPathDB" id="AmoebaDB:DDB_G0279609"/>
<dbReference type="eggNOG" id="ENOG502SGQR">
    <property type="taxonomic scope" value="Eukaryota"/>
</dbReference>
<dbReference type="HOGENOM" id="CLU_054301_0_0_1"/>
<dbReference type="InParanoid" id="Q54WK1"/>
<dbReference type="OMA" id="YYFQGER"/>
<dbReference type="PhylomeDB" id="Q54WK1"/>
<dbReference type="PRO" id="PR:Q54WK1"/>
<dbReference type="Proteomes" id="UP000002195">
    <property type="component" value="Chromosome 3"/>
</dbReference>
<dbReference type="GO" id="GO:0016301">
    <property type="term" value="F:kinase activity"/>
    <property type="evidence" value="ECO:0007669"/>
    <property type="project" value="UniProtKB-KW"/>
</dbReference>
<dbReference type="GO" id="GO:0019953">
    <property type="term" value="P:sexual reproduction"/>
    <property type="evidence" value="ECO:0000270"/>
    <property type="project" value="dictyBase"/>
</dbReference>
<dbReference type="CDD" id="cd05124">
    <property type="entry name" value="AFK"/>
    <property type="match status" value="1"/>
</dbReference>
<dbReference type="Gene3D" id="1.10.1070.11">
    <property type="entry name" value="Phosphatidylinositol 3-/4-kinase, catalytic domain"/>
    <property type="match status" value="1"/>
</dbReference>
<dbReference type="Gene3D" id="3.30.1010.10">
    <property type="entry name" value="Phosphatidylinositol 3-kinase Catalytic Subunit, Chain A, domain 4"/>
    <property type="match status" value="1"/>
</dbReference>
<dbReference type="InterPro" id="IPR015275">
    <property type="entry name" value="Actin-fragmin_kin_cat_dom"/>
</dbReference>
<dbReference type="InterPro" id="IPR011009">
    <property type="entry name" value="Kinase-like_dom_sf"/>
</dbReference>
<dbReference type="InterPro" id="IPR036940">
    <property type="entry name" value="PI3/4_kinase_cat_sf"/>
</dbReference>
<dbReference type="InterPro" id="IPR037469">
    <property type="entry name" value="Put_AFK"/>
</dbReference>
<dbReference type="PANTHER" id="PTHR38737">
    <property type="entry name" value="ACTIN-FRAGMIN KINASE DDB_G0279609-RELATED"/>
    <property type="match status" value="1"/>
</dbReference>
<dbReference type="PANTHER" id="PTHR38737:SF1">
    <property type="entry name" value="ACTIN-FRAGMIN KINASE DDB_G0279609-RELATED"/>
    <property type="match status" value="1"/>
</dbReference>
<dbReference type="Pfam" id="PF09192">
    <property type="entry name" value="Act-Frag_cataly"/>
    <property type="match status" value="1"/>
</dbReference>
<dbReference type="SUPFAM" id="SSF56112">
    <property type="entry name" value="Protein kinase-like (PK-like)"/>
    <property type="match status" value="1"/>
</dbReference>
<gene>
    <name type="ORF">DDB_G0279609</name>
</gene>
<feature type="chain" id="PRO_0000367583" description="Putative actin-fragmin kinase DDB_G0279609">
    <location>
        <begin position="1"/>
        <end position="419"/>
    </location>
</feature>
<feature type="region of interest" description="Disordered" evidence="1">
    <location>
        <begin position="73"/>
        <end position="94"/>
    </location>
</feature>
<organism>
    <name type="scientific">Dictyostelium discoideum</name>
    <name type="common">Social amoeba</name>
    <dbReference type="NCBI Taxonomy" id="44689"/>
    <lineage>
        <taxon>Eukaryota</taxon>
        <taxon>Amoebozoa</taxon>
        <taxon>Evosea</taxon>
        <taxon>Eumycetozoa</taxon>
        <taxon>Dictyostelia</taxon>
        <taxon>Dictyosteliales</taxon>
        <taxon>Dictyosteliaceae</taxon>
        <taxon>Dictyostelium</taxon>
    </lineage>
</organism>
<protein>
    <recommendedName>
        <fullName>Putative actin-fragmin kinase DDB_G0279609</fullName>
    </recommendedName>
</protein>
<proteinExistence type="inferred from homology"/>
<evidence type="ECO:0000256" key="1">
    <source>
        <dbReference type="SAM" id="MobiDB-lite"/>
    </source>
</evidence>
<evidence type="ECO:0000305" key="2"/>
<sequence>MNKIKVFKKNFFFEKIKNKKNNIEIKKSTNDSTSNTCTDIKNNIIIENKINEENIENNNNINIGNNSVNNNNINNNNNSINNNNNNNNKNKNKNNNSYIPMIQYSNIHCIDWSSLISVDKLDLGSSNIFLIATFLNNKCEYNQVLLKSSTTIVQEVYASVLESILKLPIPEMRLLEYSNDEYIQMSRSLLTISSKTNKSLYDYIKLELLKSFFLIMEYAPNGKSFKDLDYKEYFSGYGGEKKLNQLGQVIAFDIFCNNSDRLPLIWDNVSSHFSNILFYDIPNRNGWYISLMNSNVTCINNSSFTIGYRKYITRVKSILYALFKRPNIESNQIKKMRESISKSYKINLSSSCGISIQRGIIQGVQLIISRISISILSDTKEKLRHLVKVDSTTNAWKKGLDSIHLPFLSDLLDTMVLFY</sequence>
<reference key="1">
    <citation type="journal article" date="2005" name="Nature">
        <title>The genome of the social amoeba Dictyostelium discoideum.</title>
        <authorList>
            <person name="Eichinger L."/>
            <person name="Pachebat J.A."/>
            <person name="Gloeckner G."/>
            <person name="Rajandream M.A."/>
            <person name="Sucgang R."/>
            <person name="Berriman M."/>
            <person name="Song J."/>
            <person name="Olsen R."/>
            <person name="Szafranski K."/>
            <person name="Xu Q."/>
            <person name="Tunggal B."/>
            <person name="Kummerfeld S."/>
            <person name="Madera M."/>
            <person name="Konfortov B.A."/>
            <person name="Rivero F."/>
            <person name="Bankier A.T."/>
            <person name="Lehmann R."/>
            <person name="Hamlin N."/>
            <person name="Davies R."/>
            <person name="Gaudet P."/>
            <person name="Fey P."/>
            <person name="Pilcher K."/>
            <person name="Chen G."/>
            <person name="Saunders D."/>
            <person name="Sodergren E.J."/>
            <person name="Davis P."/>
            <person name="Kerhornou A."/>
            <person name="Nie X."/>
            <person name="Hall N."/>
            <person name="Anjard C."/>
            <person name="Hemphill L."/>
            <person name="Bason N."/>
            <person name="Farbrother P."/>
            <person name="Desany B."/>
            <person name="Just E."/>
            <person name="Morio T."/>
            <person name="Rost R."/>
            <person name="Churcher C.M."/>
            <person name="Cooper J."/>
            <person name="Haydock S."/>
            <person name="van Driessche N."/>
            <person name="Cronin A."/>
            <person name="Goodhead I."/>
            <person name="Muzny D.M."/>
            <person name="Mourier T."/>
            <person name="Pain A."/>
            <person name="Lu M."/>
            <person name="Harper D."/>
            <person name="Lindsay R."/>
            <person name="Hauser H."/>
            <person name="James K.D."/>
            <person name="Quiles M."/>
            <person name="Madan Babu M."/>
            <person name="Saito T."/>
            <person name="Buchrieser C."/>
            <person name="Wardroper A."/>
            <person name="Felder M."/>
            <person name="Thangavelu M."/>
            <person name="Johnson D."/>
            <person name="Knights A."/>
            <person name="Loulseged H."/>
            <person name="Mungall K.L."/>
            <person name="Oliver K."/>
            <person name="Price C."/>
            <person name="Quail M.A."/>
            <person name="Urushihara H."/>
            <person name="Hernandez J."/>
            <person name="Rabbinowitsch E."/>
            <person name="Steffen D."/>
            <person name="Sanders M."/>
            <person name="Ma J."/>
            <person name="Kohara Y."/>
            <person name="Sharp S."/>
            <person name="Simmonds M.N."/>
            <person name="Spiegler S."/>
            <person name="Tivey A."/>
            <person name="Sugano S."/>
            <person name="White B."/>
            <person name="Walker D."/>
            <person name="Woodward J.R."/>
            <person name="Winckler T."/>
            <person name="Tanaka Y."/>
            <person name="Shaulsky G."/>
            <person name="Schleicher M."/>
            <person name="Weinstock G.M."/>
            <person name="Rosenthal A."/>
            <person name="Cox E.C."/>
            <person name="Chisholm R.L."/>
            <person name="Gibbs R.A."/>
            <person name="Loomis W.F."/>
            <person name="Platzer M."/>
            <person name="Kay R.R."/>
            <person name="Williams J.G."/>
            <person name="Dear P.H."/>
            <person name="Noegel A.A."/>
            <person name="Barrell B.G."/>
            <person name="Kuspa A."/>
        </authorList>
    </citation>
    <scope>NUCLEOTIDE SEQUENCE [LARGE SCALE GENOMIC DNA]</scope>
    <source>
        <strain>AX4</strain>
    </source>
</reference>
<reference key="2">
    <citation type="journal article" date="2006" name="PLoS Genet.">
        <title>The dictyostelium kinome -- analysis of the protein kinases from a simple model organism.</title>
        <authorList>
            <person name="Goldberg J.M."/>
            <person name="Manning G."/>
            <person name="Liu A."/>
            <person name="Fey P."/>
            <person name="Pilcher K.E."/>
            <person name="Xu Y."/>
            <person name="Smith J.L."/>
        </authorList>
    </citation>
    <scope>GENE FAMILY</scope>
    <scope>NOMENCLATURE</scope>
</reference>
<reference key="3">
    <citation type="journal article" date="2003" name="Mech. Dev.">
        <title>Construction of a gamete-enriched gene pool and RNAi-mediated functional analysis in Dictyostelium discoideum.</title>
        <authorList>
            <person name="Muramoto T."/>
            <person name="Suzuki K."/>
            <person name="Shimizu H."/>
            <person name="Kohara Y."/>
            <person name="Kohriki E."/>
            <person name="Obara S."/>
            <person name="Tanaka Y."/>
            <person name="Urushihara H."/>
        </authorList>
    </citation>
    <scope>IDENTIFICATION</scope>
</reference>
<reference key="4">
    <citation type="journal article" date="2005" name="Mech. Dev.">
        <title>Reverse genetic analyses of gamete-enriched genes revealed a novel regulator of the cAMP signaling pathway in Dictyostelium discoideum.</title>
        <authorList>
            <person name="Muramoto T."/>
            <person name="Takeda S."/>
            <person name="Furuya Y."/>
            <person name="Urushihara H."/>
        </authorList>
    </citation>
    <scope>IDENTIFICATION</scope>
</reference>
<comment type="similarity">
    <text evidence="2">Belongs to the protein kinase superfamily. AFK Ser/Thr protein kinase family.</text>
</comment>
<accession>Q54WK1</accession>
<name>Y9609_DICDI</name>
<keyword id="KW-0418">Kinase</keyword>
<keyword id="KW-1185">Reference proteome</keyword>
<keyword id="KW-0808">Transferase</keyword>